<comment type="function">
    <text evidence="1">Involved in the cellular defense against the biological effects of O6-methylguanine (O6-MeG) and O4-methylthymine (O4-MeT) in DNA. Repairs the methylated nucleobase in DNA by stoichiometrically transferring the methyl group to a cysteine residue in the enzyme. This is a suicide reaction: the enzyme is irreversibly inactivated.</text>
</comment>
<comment type="catalytic activity">
    <reaction evidence="1">
        <text>a 6-O-methyl-2'-deoxyguanosine in DNA + L-cysteinyl-[protein] = S-methyl-L-cysteinyl-[protein] + a 2'-deoxyguanosine in DNA</text>
        <dbReference type="Rhea" id="RHEA:24000"/>
        <dbReference type="Rhea" id="RHEA-COMP:10131"/>
        <dbReference type="Rhea" id="RHEA-COMP:10132"/>
        <dbReference type="Rhea" id="RHEA-COMP:11367"/>
        <dbReference type="Rhea" id="RHEA-COMP:11368"/>
        <dbReference type="ChEBI" id="CHEBI:29950"/>
        <dbReference type="ChEBI" id="CHEBI:82612"/>
        <dbReference type="ChEBI" id="CHEBI:85445"/>
        <dbReference type="ChEBI" id="CHEBI:85448"/>
        <dbReference type="EC" id="2.1.1.63"/>
    </reaction>
</comment>
<comment type="catalytic activity">
    <reaction evidence="1">
        <text>a 4-O-methyl-thymidine in DNA + L-cysteinyl-[protein] = a thymidine in DNA + S-methyl-L-cysteinyl-[protein]</text>
        <dbReference type="Rhea" id="RHEA:53428"/>
        <dbReference type="Rhea" id="RHEA-COMP:10131"/>
        <dbReference type="Rhea" id="RHEA-COMP:10132"/>
        <dbReference type="Rhea" id="RHEA-COMP:13555"/>
        <dbReference type="Rhea" id="RHEA-COMP:13556"/>
        <dbReference type="ChEBI" id="CHEBI:29950"/>
        <dbReference type="ChEBI" id="CHEBI:82612"/>
        <dbReference type="ChEBI" id="CHEBI:137386"/>
        <dbReference type="ChEBI" id="CHEBI:137387"/>
        <dbReference type="EC" id="2.1.1.63"/>
    </reaction>
</comment>
<comment type="subcellular location">
    <subcellularLocation>
        <location evidence="1">Cytoplasm</location>
    </subcellularLocation>
</comment>
<comment type="miscellaneous">
    <text evidence="1">This enzyme catalyzes only one turnover and therefore is not strictly catalytic. According to one definition, an enzyme is a biocatalyst that acts repeatedly and over many reaction cycles.</text>
</comment>
<comment type="similarity">
    <text evidence="1">Belongs to the MGMT family.</text>
</comment>
<keyword id="KW-0963">Cytoplasm</keyword>
<keyword id="KW-0227">DNA damage</keyword>
<keyword id="KW-0234">DNA repair</keyword>
<keyword id="KW-0489">Methyltransferase</keyword>
<keyword id="KW-1185">Reference proteome</keyword>
<keyword id="KW-0808">Transferase</keyword>
<gene>
    <name evidence="1" type="primary">ogt</name>
    <name type="ordered locus">TSIB_1021</name>
</gene>
<name>OGT_THESM</name>
<accession>C6A382</accession>
<evidence type="ECO:0000250" key="1">
    <source>
        <dbReference type="UniProtKB" id="O74023"/>
    </source>
</evidence>
<sequence length="175" mass="20027">MISIKSFQIGEKEIVIAILFDKKIQGITFSFDGEQFLQERVNALVEHLTNRGVKVNLEERDSELPALVYKILIGEIRNQDGLEYLSFEGTTPFEKKVYETLTKKVKRGEVITYGELAKMLRSSPRAIGGAMKRNPYPIIVPCHRVIASNNIGNYTPKREYKRFLLETEGVKTWTS</sequence>
<dbReference type="EC" id="2.1.1.63" evidence="1"/>
<dbReference type="EMBL" id="CP001463">
    <property type="protein sequence ID" value="ACS90077.1"/>
    <property type="molecule type" value="Genomic_DNA"/>
</dbReference>
<dbReference type="SMR" id="C6A382"/>
<dbReference type="STRING" id="604354.TSIB_1021"/>
<dbReference type="GeneID" id="8096017"/>
<dbReference type="KEGG" id="tsi:TSIB_1021"/>
<dbReference type="eggNOG" id="arCOG02724">
    <property type="taxonomic scope" value="Archaea"/>
</dbReference>
<dbReference type="HOGENOM" id="CLU_000445_52_2_2"/>
<dbReference type="OrthoDB" id="372118at2157"/>
<dbReference type="Proteomes" id="UP000009079">
    <property type="component" value="Chromosome"/>
</dbReference>
<dbReference type="GO" id="GO:0005737">
    <property type="term" value="C:cytoplasm"/>
    <property type="evidence" value="ECO:0007669"/>
    <property type="project" value="UniProtKB-SubCell"/>
</dbReference>
<dbReference type="GO" id="GO:0003908">
    <property type="term" value="F:methylated-DNA-[protein]-cysteine S-methyltransferase activity"/>
    <property type="evidence" value="ECO:0007669"/>
    <property type="project" value="UniProtKB-EC"/>
</dbReference>
<dbReference type="GO" id="GO:0006281">
    <property type="term" value="P:DNA repair"/>
    <property type="evidence" value="ECO:0007669"/>
    <property type="project" value="UniProtKB-KW"/>
</dbReference>
<dbReference type="GO" id="GO:0032259">
    <property type="term" value="P:methylation"/>
    <property type="evidence" value="ECO:0007669"/>
    <property type="project" value="UniProtKB-KW"/>
</dbReference>
<dbReference type="CDD" id="cd06445">
    <property type="entry name" value="ATase"/>
    <property type="match status" value="1"/>
</dbReference>
<dbReference type="FunFam" id="1.10.10.10:FF:000214">
    <property type="entry name" value="Methylated-DNA--protein-cysteine methyltransferase"/>
    <property type="match status" value="1"/>
</dbReference>
<dbReference type="Gene3D" id="3.30.160.70">
    <property type="entry name" value="Methylated DNA-protein cysteine methyltransferase domain"/>
    <property type="match status" value="1"/>
</dbReference>
<dbReference type="Gene3D" id="1.10.10.10">
    <property type="entry name" value="Winged helix-like DNA-binding domain superfamily/Winged helix DNA-binding domain"/>
    <property type="match status" value="1"/>
</dbReference>
<dbReference type="InterPro" id="IPR054936">
    <property type="entry name" value="DNA_protcyst_Mta_Thcoc"/>
</dbReference>
<dbReference type="InterPro" id="IPR001497">
    <property type="entry name" value="MethylDNA_cys_MeTrfase_AS"/>
</dbReference>
<dbReference type="InterPro" id="IPR014048">
    <property type="entry name" value="MethylDNA_cys_MeTrfase_DNA-bd"/>
</dbReference>
<dbReference type="InterPro" id="IPR036217">
    <property type="entry name" value="MethylDNA_cys_MeTrfase_DNAb"/>
</dbReference>
<dbReference type="InterPro" id="IPR015236">
    <property type="entry name" value="MGMT_N"/>
</dbReference>
<dbReference type="InterPro" id="IPR036631">
    <property type="entry name" value="MGMT_N_sf"/>
</dbReference>
<dbReference type="InterPro" id="IPR036388">
    <property type="entry name" value="WH-like_DNA-bd_sf"/>
</dbReference>
<dbReference type="NCBIfam" id="NF041132">
    <property type="entry name" value="DNA_protcyst_Mta_Thcoc"/>
    <property type="match status" value="1"/>
</dbReference>
<dbReference type="NCBIfam" id="TIGR00589">
    <property type="entry name" value="ogt"/>
    <property type="match status" value="1"/>
</dbReference>
<dbReference type="NCBIfam" id="NF003022">
    <property type="entry name" value="PRK03887.1"/>
    <property type="match status" value="1"/>
</dbReference>
<dbReference type="PANTHER" id="PTHR46460">
    <property type="entry name" value="METHYLATED-DNA--PROTEIN-CYSTEINE METHYLTRANSFERASE"/>
    <property type="match status" value="1"/>
</dbReference>
<dbReference type="PANTHER" id="PTHR46460:SF1">
    <property type="entry name" value="METHYLATED-DNA--PROTEIN-CYSTEINE METHYLTRANSFERASE"/>
    <property type="match status" value="1"/>
</dbReference>
<dbReference type="Pfam" id="PF01035">
    <property type="entry name" value="DNA_binding_1"/>
    <property type="match status" value="1"/>
</dbReference>
<dbReference type="Pfam" id="PF09153">
    <property type="entry name" value="MGMT_N"/>
    <property type="match status" value="1"/>
</dbReference>
<dbReference type="SUPFAM" id="SSF53155">
    <property type="entry name" value="Methylated DNA-protein cysteine methyltransferase domain"/>
    <property type="match status" value="1"/>
</dbReference>
<dbReference type="SUPFAM" id="SSF46767">
    <property type="entry name" value="Methylated DNA-protein cysteine methyltransferase, C-terminal domain"/>
    <property type="match status" value="1"/>
</dbReference>
<dbReference type="PROSITE" id="PS00374">
    <property type="entry name" value="MGMT"/>
    <property type="match status" value="1"/>
</dbReference>
<proteinExistence type="inferred from homology"/>
<protein>
    <recommendedName>
        <fullName evidence="1">Methylated-DNA--protein-cysteine methyltransferase</fullName>
        <ecNumber evidence="1">2.1.1.63</ecNumber>
    </recommendedName>
    <alternativeName>
        <fullName evidence="1">6-O-methylguanine-DNA methyltransferase</fullName>
        <shortName evidence="1">MGMT</shortName>
    </alternativeName>
    <alternativeName>
        <fullName evidence="1">O-6-methylguanine-DNA-alkyltransferase</fullName>
    </alternativeName>
</protein>
<organism>
    <name type="scientific">Thermococcus sibiricus (strain DSM 12597 / MM 739)</name>
    <dbReference type="NCBI Taxonomy" id="604354"/>
    <lineage>
        <taxon>Archaea</taxon>
        <taxon>Methanobacteriati</taxon>
        <taxon>Methanobacteriota</taxon>
        <taxon>Thermococci</taxon>
        <taxon>Thermococcales</taxon>
        <taxon>Thermococcaceae</taxon>
        <taxon>Thermococcus</taxon>
    </lineage>
</organism>
<reference key="1">
    <citation type="journal article" date="2009" name="Appl. Environ. Microbiol.">
        <title>Metabolic versatility and indigenous origin of the archaeon Thermococcus sibiricus, isolated from a siberian oil reservoir, as revealed by genome analysis.</title>
        <authorList>
            <person name="Mardanov A.V."/>
            <person name="Ravin N.V."/>
            <person name="Svetlitchnyi V.A."/>
            <person name="Beletsky A.V."/>
            <person name="Miroshnichenko M.L."/>
            <person name="Bonch-Osmolovskaya E.A."/>
            <person name="Skryabin K.G."/>
        </authorList>
    </citation>
    <scope>NUCLEOTIDE SEQUENCE [LARGE SCALE GENOMIC DNA]</scope>
    <source>
        <strain>DSM 12597 / MM 739</strain>
    </source>
</reference>
<feature type="chain" id="PRO_1000212908" description="Methylated-DNA--protein-cysteine methyltransferase">
    <location>
        <begin position="1"/>
        <end position="175"/>
    </location>
</feature>
<feature type="active site" description="Nucleophile; methyl group acceptor" evidence="1">
    <location>
        <position position="142"/>
    </location>
</feature>